<protein>
    <recommendedName>
        <fullName>Transcription factor SOX-14</fullName>
    </recommendedName>
    <alternativeName>
        <fullName>SRY-related protein CH60</fullName>
    </alternativeName>
</protein>
<gene>
    <name type="primary">SOX14</name>
</gene>
<organism evidence="6">
    <name type="scientific">Gallus gallus</name>
    <name type="common">Chicken</name>
    <dbReference type="NCBI Taxonomy" id="9031"/>
    <lineage>
        <taxon>Eukaryota</taxon>
        <taxon>Metazoa</taxon>
        <taxon>Chordata</taxon>
        <taxon>Craniata</taxon>
        <taxon>Vertebrata</taxon>
        <taxon>Euteleostomi</taxon>
        <taxon>Archelosauria</taxon>
        <taxon>Archosauria</taxon>
        <taxon>Dinosauria</taxon>
        <taxon>Saurischia</taxon>
        <taxon>Theropoda</taxon>
        <taxon>Coelurosauria</taxon>
        <taxon>Aves</taxon>
        <taxon>Neognathae</taxon>
        <taxon>Galloanserae</taxon>
        <taxon>Galliformes</taxon>
        <taxon>Phasianidae</taxon>
        <taxon>Phasianinae</taxon>
        <taxon>Gallus</taxon>
    </lineage>
</organism>
<proteinExistence type="evidence at transcript level"/>
<keyword id="KW-0238">DNA-binding</keyword>
<keyword id="KW-0539">Nucleus</keyword>
<keyword id="KW-1185">Reference proteome</keyword>
<keyword id="KW-0678">Repressor</keyword>
<keyword id="KW-0804">Transcription</keyword>
<keyword id="KW-0805">Transcription regulation</keyword>
<evidence type="ECO:0000255" key="1">
    <source>
        <dbReference type="PROSITE-ProRule" id="PRU00267"/>
    </source>
</evidence>
<evidence type="ECO:0000256" key="2">
    <source>
        <dbReference type="SAM" id="MobiDB-lite"/>
    </source>
</evidence>
<evidence type="ECO:0000269" key="3">
    <source>
    </source>
</evidence>
<evidence type="ECO:0000269" key="4">
    <source>
    </source>
</evidence>
<evidence type="ECO:0000305" key="5"/>
<evidence type="ECO:0000312" key="6">
    <source>
        <dbReference type="EMBL" id="AAF61300.2"/>
    </source>
</evidence>
<sequence length="240" mass="26666">MSKPSDHIKRPMNAFMVWSRGQRRKMAQENPKMHNSEISKRLGAEWKLLSEAEKRPYIDEAKRLRAQHMKEHPDYKYRPRRKPKNLLKKDRYVFPLPYLGETDPLKAAGLPVGATDSLLSSPEKARAFLPPTSAPYSLLDPSQFSSSAIQKMTEVPHTLATGTLPYASTLGYQNGAFGSLSCPSQHTHTHPSPTNPGYVVPCNCTAWSASSLQPPVAYILFPGMTKTGIDPYSSAHATAM</sequence>
<comment type="function">
    <text evidence="3">Acts as a negative regulator of transcription.</text>
</comment>
<comment type="subcellular location">
    <subcellularLocation>
        <location evidence="5">Nucleus</location>
    </subcellularLocation>
</comment>
<comment type="tissue specificity">
    <text evidence="3 4">Highly expressed in developing brain and spinal cord.</text>
</comment>
<feature type="chain" id="PRO_0000048761" description="Transcription factor SOX-14">
    <location>
        <begin position="1"/>
        <end position="240"/>
    </location>
</feature>
<feature type="DNA-binding region" description="HMG box" evidence="1">
    <location>
        <begin position="8"/>
        <end position="76"/>
    </location>
</feature>
<feature type="region of interest" description="Disordered" evidence="2">
    <location>
        <begin position="19"/>
        <end position="38"/>
    </location>
</feature>
<feature type="sequence conflict" description="In Ref. 3; AAA48683." evidence="5" ref="3">
    <original>H</original>
    <variation>Y</variation>
    <location>
        <position position="72"/>
    </location>
</feature>
<dbReference type="EMBL" id="AB026622">
    <property type="protein sequence ID" value="BAA77265.1"/>
    <property type="molecule type" value="Genomic_DNA"/>
</dbReference>
<dbReference type="EMBL" id="AF193760">
    <property type="protein sequence ID" value="AAF61300.2"/>
    <property type="molecule type" value="mRNA"/>
</dbReference>
<dbReference type="EMBL" id="M86326">
    <property type="protein sequence ID" value="AAA48683.1"/>
    <property type="molecule type" value="Genomic_DNA"/>
</dbReference>
<dbReference type="PIR" id="I50196">
    <property type="entry name" value="I50196"/>
</dbReference>
<dbReference type="RefSeq" id="NP_990092.1">
    <property type="nucleotide sequence ID" value="NM_204761.1"/>
</dbReference>
<dbReference type="SMR" id="Q9W7R6"/>
<dbReference type="STRING" id="9031.ENSGALP00000048810"/>
<dbReference type="PaxDb" id="9031-ENSGALP00000028003"/>
<dbReference type="Ensembl" id="ENSGALT00010063456.1">
    <property type="protein sequence ID" value="ENSGALP00010039172.1"/>
    <property type="gene ID" value="ENSGALG00010026014.1"/>
</dbReference>
<dbReference type="GeneID" id="395526"/>
<dbReference type="KEGG" id="gga:395526"/>
<dbReference type="CTD" id="8403"/>
<dbReference type="VEuPathDB" id="HostDB:geneid_395526"/>
<dbReference type="eggNOG" id="KOG0527">
    <property type="taxonomic scope" value="Eukaryota"/>
</dbReference>
<dbReference type="GeneTree" id="ENSGT00940000160749"/>
<dbReference type="InParanoid" id="Q9W7R6"/>
<dbReference type="OMA" id="KMTQEMP"/>
<dbReference type="OrthoDB" id="6247875at2759"/>
<dbReference type="PhylomeDB" id="Q9W7R6"/>
<dbReference type="PRO" id="PR:Q9W7R6"/>
<dbReference type="Proteomes" id="UP000000539">
    <property type="component" value="Chromosome 9"/>
</dbReference>
<dbReference type="GO" id="GO:0005634">
    <property type="term" value="C:nucleus"/>
    <property type="evidence" value="ECO:0000318"/>
    <property type="project" value="GO_Central"/>
</dbReference>
<dbReference type="GO" id="GO:0005667">
    <property type="term" value="C:transcription regulator complex"/>
    <property type="evidence" value="ECO:0007669"/>
    <property type="project" value="Ensembl"/>
</dbReference>
<dbReference type="GO" id="GO:0003682">
    <property type="term" value="F:chromatin binding"/>
    <property type="evidence" value="ECO:0007669"/>
    <property type="project" value="Ensembl"/>
</dbReference>
<dbReference type="GO" id="GO:0001228">
    <property type="term" value="F:DNA-binding transcription activator activity, RNA polymerase II-specific"/>
    <property type="evidence" value="ECO:0000318"/>
    <property type="project" value="GO_Central"/>
</dbReference>
<dbReference type="GO" id="GO:0000978">
    <property type="term" value="F:RNA polymerase II cis-regulatory region sequence-specific DNA binding"/>
    <property type="evidence" value="ECO:0000318"/>
    <property type="project" value="GO_Central"/>
</dbReference>
<dbReference type="GO" id="GO:0043565">
    <property type="term" value="F:sequence-specific DNA binding"/>
    <property type="evidence" value="ECO:0000314"/>
    <property type="project" value="UniProtKB"/>
</dbReference>
<dbReference type="GO" id="GO:0007420">
    <property type="term" value="P:brain development"/>
    <property type="evidence" value="ECO:0000318"/>
    <property type="project" value="GO_Central"/>
</dbReference>
<dbReference type="GO" id="GO:0009649">
    <property type="term" value="P:entrainment of circadian clock"/>
    <property type="evidence" value="ECO:0007669"/>
    <property type="project" value="Ensembl"/>
</dbReference>
<dbReference type="GO" id="GO:0045892">
    <property type="term" value="P:negative regulation of DNA-templated transcription"/>
    <property type="evidence" value="ECO:0000314"/>
    <property type="project" value="UniProtKB"/>
</dbReference>
<dbReference type="GO" id="GO:0000122">
    <property type="term" value="P:negative regulation of transcription by RNA polymerase II"/>
    <property type="evidence" value="ECO:0000314"/>
    <property type="project" value="UniProtKB"/>
</dbReference>
<dbReference type="GO" id="GO:0030182">
    <property type="term" value="P:neuron differentiation"/>
    <property type="evidence" value="ECO:0000318"/>
    <property type="project" value="GO_Central"/>
</dbReference>
<dbReference type="GO" id="GO:0045944">
    <property type="term" value="P:positive regulation of transcription by RNA polymerase II"/>
    <property type="evidence" value="ECO:0000318"/>
    <property type="project" value="GO_Central"/>
</dbReference>
<dbReference type="GO" id="GO:2001222">
    <property type="term" value="P:regulation of neuron migration"/>
    <property type="evidence" value="ECO:0007669"/>
    <property type="project" value="Ensembl"/>
</dbReference>
<dbReference type="GO" id="GO:0007601">
    <property type="term" value="P:visual perception"/>
    <property type="evidence" value="ECO:0007669"/>
    <property type="project" value="Ensembl"/>
</dbReference>
<dbReference type="CDD" id="cd01388">
    <property type="entry name" value="HMG-box_SoxB"/>
    <property type="match status" value="1"/>
</dbReference>
<dbReference type="FunFam" id="1.10.30.10:FF:000002">
    <property type="entry name" value="transcription factor Sox-2"/>
    <property type="match status" value="1"/>
</dbReference>
<dbReference type="Gene3D" id="1.10.30.10">
    <property type="entry name" value="High mobility group box domain"/>
    <property type="match status" value="1"/>
</dbReference>
<dbReference type="InterPro" id="IPR009071">
    <property type="entry name" value="HMG_box_dom"/>
</dbReference>
<dbReference type="InterPro" id="IPR036910">
    <property type="entry name" value="HMG_box_dom_sf"/>
</dbReference>
<dbReference type="InterPro" id="IPR022097">
    <property type="entry name" value="SOX_fam"/>
</dbReference>
<dbReference type="InterPro" id="IPR050140">
    <property type="entry name" value="SRY-related_HMG-box_TF-like"/>
</dbReference>
<dbReference type="PANTHER" id="PTHR10270">
    <property type="entry name" value="SOX TRANSCRIPTION FACTOR"/>
    <property type="match status" value="1"/>
</dbReference>
<dbReference type="PANTHER" id="PTHR10270:SF107">
    <property type="entry name" value="TRANSCRIPTION FACTOR SOX-14"/>
    <property type="match status" value="1"/>
</dbReference>
<dbReference type="Pfam" id="PF00505">
    <property type="entry name" value="HMG_box"/>
    <property type="match status" value="1"/>
</dbReference>
<dbReference type="Pfam" id="PF12336">
    <property type="entry name" value="SOXp"/>
    <property type="match status" value="1"/>
</dbReference>
<dbReference type="SMART" id="SM00398">
    <property type="entry name" value="HMG"/>
    <property type="match status" value="1"/>
</dbReference>
<dbReference type="SUPFAM" id="SSF47095">
    <property type="entry name" value="HMG-box"/>
    <property type="match status" value="1"/>
</dbReference>
<dbReference type="PROSITE" id="PS50118">
    <property type="entry name" value="HMG_BOX_2"/>
    <property type="match status" value="1"/>
</dbReference>
<name>SOX14_CHICK</name>
<reference evidence="5" key="1">
    <citation type="journal article" date="1999" name="Mech. Dev.">
        <title>Two distinct subgroups of Group B Sox genes for transcriptional activators and repressors: their expression during embryonic organogenesis of the chicken.</title>
        <authorList>
            <person name="Uchikawa M."/>
            <person name="Kamachi Y."/>
            <person name="Kondoh H."/>
        </authorList>
    </citation>
    <scope>NUCLEOTIDE SEQUENCE [GENOMIC DNA]</scope>
    <scope>FUNCTION</scope>
    <scope>TISSUE SPECIFICITY</scope>
    <source>
        <tissue>Liver</tissue>
    </source>
</reference>
<reference evidence="5" key="2">
    <citation type="journal article" date="2000" name="Dev. Biol.">
        <title>The HMG box transcription factor gene Sox14 marks a novel subset of ventral interneurons and is regulated by sonic hedgehog.</title>
        <authorList>
            <person name="Hargrave M."/>
            <person name="Karunaratne A."/>
            <person name="Cox L."/>
            <person name="Wood S."/>
            <person name="Koopman P."/>
            <person name="Yamada T."/>
        </authorList>
    </citation>
    <scope>NUCLEOTIDE SEQUENCE [MRNA]</scope>
    <scope>TISSUE SPECIFICITY</scope>
</reference>
<reference key="3">
    <citation type="journal article" date="1993" name="PCR Methods Appl.">
        <title>PCR amplification of SRY-related gene sequences reveals evolutionary conservation of the SRY-box motif.</title>
        <authorList>
            <person name="Coriat A.M."/>
            <person name="Mueller U."/>
            <person name="Harry J.L."/>
            <person name="Uwanogho D."/>
            <person name="Sharpe P.T."/>
        </authorList>
    </citation>
    <scope>NUCLEOTIDE SEQUENCE [GENOMIC DNA] OF 26-79</scope>
    <source>
        <tissue>Blood</tissue>
    </source>
</reference>
<accession>Q9W7R6</accession>
<accession>P40672</accession>